<proteinExistence type="inferred from homology"/>
<dbReference type="EC" id="2.1.3.15" evidence="1"/>
<dbReference type="EMBL" id="CP000020">
    <property type="protein sequence ID" value="AAW86441.1"/>
    <property type="molecule type" value="Genomic_DNA"/>
</dbReference>
<dbReference type="RefSeq" id="WP_011262422.1">
    <property type="nucleotide sequence ID" value="NC_006840.2"/>
</dbReference>
<dbReference type="RefSeq" id="YP_205329.1">
    <property type="nucleotide sequence ID" value="NC_006840.2"/>
</dbReference>
<dbReference type="SMR" id="Q5E3F5"/>
<dbReference type="STRING" id="312309.VF_1946"/>
<dbReference type="EnsemblBacteria" id="AAW86441">
    <property type="protein sequence ID" value="AAW86441"/>
    <property type="gene ID" value="VF_1946"/>
</dbReference>
<dbReference type="GeneID" id="54164642"/>
<dbReference type="KEGG" id="vfi:VF_1946"/>
<dbReference type="PATRIC" id="fig|312309.11.peg.1973"/>
<dbReference type="eggNOG" id="COG0825">
    <property type="taxonomic scope" value="Bacteria"/>
</dbReference>
<dbReference type="HOGENOM" id="CLU_015486_0_2_6"/>
<dbReference type="OrthoDB" id="9808023at2"/>
<dbReference type="UniPathway" id="UPA00655">
    <property type="reaction ID" value="UER00711"/>
</dbReference>
<dbReference type="Proteomes" id="UP000000537">
    <property type="component" value="Chromosome I"/>
</dbReference>
<dbReference type="GO" id="GO:0009317">
    <property type="term" value="C:acetyl-CoA carboxylase complex"/>
    <property type="evidence" value="ECO:0007669"/>
    <property type="project" value="InterPro"/>
</dbReference>
<dbReference type="GO" id="GO:0003989">
    <property type="term" value="F:acetyl-CoA carboxylase activity"/>
    <property type="evidence" value="ECO:0007669"/>
    <property type="project" value="InterPro"/>
</dbReference>
<dbReference type="GO" id="GO:0005524">
    <property type="term" value="F:ATP binding"/>
    <property type="evidence" value="ECO:0007669"/>
    <property type="project" value="UniProtKB-KW"/>
</dbReference>
<dbReference type="GO" id="GO:0016743">
    <property type="term" value="F:carboxyl- or carbamoyltransferase activity"/>
    <property type="evidence" value="ECO:0007669"/>
    <property type="project" value="UniProtKB-UniRule"/>
</dbReference>
<dbReference type="GO" id="GO:0006633">
    <property type="term" value="P:fatty acid biosynthetic process"/>
    <property type="evidence" value="ECO:0007669"/>
    <property type="project" value="UniProtKB-KW"/>
</dbReference>
<dbReference type="GO" id="GO:2001295">
    <property type="term" value="P:malonyl-CoA biosynthetic process"/>
    <property type="evidence" value="ECO:0007669"/>
    <property type="project" value="UniProtKB-UniRule"/>
</dbReference>
<dbReference type="FunFam" id="3.90.226.10:FF:000008">
    <property type="entry name" value="Acetyl-coenzyme A carboxylase carboxyl transferase subunit alpha"/>
    <property type="match status" value="1"/>
</dbReference>
<dbReference type="Gene3D" id="3.90.226.10">
    <property type="entry name" value="2-enoyl-CoA Hydratase, Chain A, domain 1"/>
    <property type="match status" value="1"/>
</dbReference>
<dbReference type="HAMAP" id="MF_00823">
    <property type="entry name" value="AcetylCoA_CT_alpha"/>
    <property type="match status" value="1"/>
</dbReference>
<dbReference type="InterPro" id="IPR001095">
    <property type="entry name" value="Acetyl_CoA_COase_a_su"/>
</dbReference>
<dbReference type="InterPro" id="IPR029045">
    <property type="entry name" value="ClpP/crotonase-like_dom_sf"/>
</dbReference>
<dbReference type="InterPro" id="IPR011763">
    <property type="entry name" value="COA_CT_C"/>
</dbReference>
<dbReference type="NCBIfam" id="TIGR00513">
    <property type="entry name" value="accA"/>
    <property type="match status" value="1"/>
</dbReference>
<dbReference type="NCBIfam" id="NF041504">
    <property type="entry name" value="AccA_sub"/>
    <property type="match status" value="1"/>
</dbReference>
<dbReference type="NCBIfam" id="NF004344">
    <property type="entry name" value="PRK05724.1"/>
    <property type="match status" value="1"/>
</dbReference>
<dbReference type="PANTHER" id="PTHR42853">
    <property type="entry name" value="ACETYL-COENZYME A CARBOXYLASE CARBOXYL TRANSFERASE SUBUNIT ALPHA"/>
    <property type="match status" value="1"/>
</dbReference>
<dbReference type="PANTHER" id="PTHR42853:SF3">
    <property type="entry name" value="ACETYL-COENZYME A CARBOXYLASE CARBOXYL TRANSFERASE SUBUNIT ALPHA, CHLOROPLASTIC"/>
    <property type="match status" value="1"/>
</dbReference>
<dbReference type="Pfam" id="PF03255">
    <property type="entry name" value="ACCA"/>
    <property type="match status" value="1"/>
</dbReference>
<dbReference type="PRINTS" id="PR01069">
    <property type="entry name" value="ACCCTRFRASEA"/>
</dbReference>
<dbReference type="SUPFAM" id="SSF52096">
    <property type="entry name" value="ClpP/crotonase"/>
    <property type="match status" value="1"/>
</dbReference>
<dbReference type="PROSITE" id="PS50989">
    <property type="entry name" value="COA_CT_CTER"/>
    <property type="match status" value="1"/>
</dbReference>
<protein>
    <recommendedName>
        <fullName evidence="1">Acetyl-coenzyme A carboxylase carboxyl transferase subunit alpha</fullName>
        <shortName evidence="1">ACCase subunit alpha</shortName>
        <shortName evidence="1">Acetyl-CoA carboxylase carboxyltransferase subunit alpha</shortName>
        <ecNumber evidence="1">2.1.3.15</ecNumber>
    </recommendedName>
</protein>
<reference key="1">
    <citation type="journal article" date="2005" name="Proc. Natl. Acad. Sci. U.S.A.">
        <title>Complete genome sequence of Vibrio fischeri: a symbiotic bacterium with pathogenic congeners.</title>
        <authorList>
            <person name="Ruby E.G."/>
            <person name="Urbanowski M."/>
            <person name="Campbell J."/>
            <person name="Dunn A."/>
            <person name="Faini M."/>
            <person name="Gunsalus R."/>
            <person name="Lostroh P."/>
            <person name="Lupp C."/>
            <person name="McCann J."/>
            <person name="Millikan D."/>
            <person name="Schaefer A."/>
            <person name="Stabb E."/>
            <person name="Stevens A."/>
            <person name="Visick K."/>
            <person name="Whistler C."/>
            <person name="Greenberg E.P."/>
        </authorList>
    </citation>
    <scope>NUCLEOTIDE SEQUENCE [LARGE SCALE GENOMIC DNA]</scope>
    <source>
        <strain>ATCC 700601 / ES114</strain>
    </source>
</reference>
<comment type="function">
    <text evidence="1">Component of the acetyl coenzyme A carboxylase (ACC) complex. First, biotin carboxylase catalyzes the carboxylation of biotin on its carrier protein (BCCP) and then the CO(2) group is transferred by the carboxyltransferase to acetyl-CoA to form malonyl-CoA.</text>
</comment>
<comment type="catalytic activity">
    <reaction evidence="1">
        <text>N(6)-carboxybiotinyl-L-lysyl-[protein] + acetyl-CoA = N(6)-biotinyl-L-lysyl-[protein] + malonyl-CoA</text>
        <dbReference type="Rhea" id="RHEA:54728"/>
        <dbReference type="Rhea" id="RHEA-COMP:10505"/>
        <dbReference type="Rhea" id="RHEA-COMP:10506"/>
        <dbReference type="ChEBI" id="CHEBI:57288"/>
        <dbReference type="ChEBI" id="CHEBI:57384"/>
        <dbReference type="ChEBI" id="CHEBI:83144"/>
        <dbReference type="ChEBI" id="CHEBI:83145"/>
        <dbReference type="EC" id="2.1.3.15"/>
    </reaction>
</comment>
<comment type="pathway">
    <text evidence="1">Lipid metabolism; malonyl-CoA biosynthesis; malonyl-CoA from acetyl-CoA: step 1/1.</text>
</comment>
<comment type="subunit">
    <text evidence="1">Acetyl-CoA carboxylase is a heterohexamer composed of biotin carboxyl carrier protein (AccB), biotin carboxylase (AccC) and two subunits each of ACCase subunit alpha (AccA) and ACCase subunit beta (AccD).</text>
</comment>
<comment type="subcellular location">
    <subcellularLocation>
        <location evidence="1">Cytoplasm</location>
    </subcellularLocation>
</comment>
<comment type="similarity">
    <text evidence="1">Belongs to the AccA family.</text>
</comment>
<gene>
    <name evidence="1" type="primary">accA</name>
    <name type="ordered locus">VF_1946</name>
</gene>
<name>ACCA_ALIF1</name>
<organism>
    <name type="scientific">Aliivibrio fischeri (strain ATCC 700601 / ES114)</name>
    <name type="common">Vibrio fischeri</name>
    <dbReference type="NCBI Taxonomy" id="312309"/>
    <lineage>
        <taxon>Bacteria</taxon>
        <taxon>Pseudomonadati</taxon>
        <taxon>Pseudomonadota</taxon>
        <taxon>Gammaproteobacteria</taxon>
        <taxon>Vibrionales</taxon>
        <taxon>Vibrionaceae</taxon>
        <taxon>Aliivibrio</taxon>
    </lineage>
</organism>
<evidence type="ECO:0000255" key="1">
    <source>
        <dbReference type="HAMAP-Rule" id="MF_00823"/>
    </source>
</evidence>
<evidence type="ECO:0000255" key="2">
    <source>
        <dbReference type="PROSITE-ProRule" id="PRU01137"/>
    </source>
</evidence>
<feature type="chain" id="PRO_0000223848" description="Acetyl-coenzyme A carboxylase carboxyl transferase subunit alpha">
    <location>
        <begin position="1"/>
        <end position="319"/>
    </location>
</feature>
<feature type="domain" description="CoA carboxyltransferase C-terminal" evidence="2">
    <location>
        <begin position="35"/>
        <end position="296"/>
    </location>
</feature>
<accession>Q5E3F5</accession>
<sequence length="319" mass="35553">MSLNFLEFEKPIAELEAKVEALREISRRGGENALDLEKEIKQLEDKCLELKKKTFSDLGAWEVAQLARHPERPYVLDYIEHMFTEFDELAGDRAFADDKALVGGIARLDGRPVMVIGHQKGRGTKEKVIRNFGMPKPEGYRKAKRLMQMAERFNMPVITFIDTAGAYPGVGAEERGQSEAIAMNLKIMSELSVPVICNVVGEGGSGGALAIGVGDYVNMLQYSTYSVISPEGCASILWRDSDKAPQAAEAMGLVAPRLKELELIDTIIDEPLGGAHRDHKATAENIKQRLLEQLKELDAFDNEALLERRYQRLMSYGYC</sequence>
<keyword id="KW-0067">ATP-binding</keyword>
<keyword id="KW-0963">Cytoplasm</keyword>
<keyword id="KW-0275">Fatty acid biosynthesis</keyword>
<keyword id="KW-0276">Fatty acid metabolism</keyword>
<keyword id="KW-0444">Lipid biosynthesis</keyword>
<keyword id="KW-0443">Lipid metabolism</keyword>
<keyword id="KW-0547">Nucleotide-binding</keyword>
<keyword id="KW-1185">Reference proteome</keyword>
<keyword id="KW-0808">Transferase</keyword>